<name>PSD_PSEP1</name>
<comment type="function">
    <text evidence="1">Catalyzes the formation of phosphatidylethanolamine (PtdEtn) from phosphatidylserine (PtdSer).</text>
</comment>
<comment type="catalytic activity">
    <reaction evidence="1">
        <text>a 1,2-diacyl-sn-glycero-3-phospho-L-serine + H(+) = a 1,2-diacyl-sn-glycero-3-phosphoethanolamine + CO2</text>
        <dbReference type="Rhea" id="RHEA:20828"/>
        <dbReference type="ChEBI" id="CHEBI:15378"/>
        <dbReference type="ChEBI" id="CHEBI:16526"/>
        <dbReference type="ChEBI" id="CHEBI:57262"/>
        <dbReference type="ChEBI" id="CHEBI:64612"/>
        <dbReference type="EC" id="4.1.1.65"/>
    </reaction>
</comment>
<comment type="cofactor">
    <cofactor evidence="1">
        <name>pyruvate</name>
        <dbReference type="ChEBI" id="CHEBI:15361"/>
    </cofactor>
    <text evidence="1">Binds 1 pyruvoyl group covalently per subunit.</text>
</comment>
<comment type="pathway">
    <text evidence="1">Phospholipid metabolism; phosphatidylethanolamine biosynthesis; phosphatidylethanolamine from CDP-diacylglycerol: step 2/2.</text>
</comment>
<comment type="subunit">
    <text evidence="1">Heterodimer of a large membrane-associated beta subunit and a small pyruvoyl-containing alpha subunit.</text>
</comment>
<comment type="subcellular location">
    <subcellularLocation>
        <location evidence="1">Cell membrane</location>
        <topology evidence="1">Peripheral membrane protein</topology>
    </subcellularLocation>
</comment>
<comment type="PTM">
    <text evidence="1">Is synthesized initially as an inactive proenzyme. Formation of the active enzyme involves a self-maturation process in which the active site pyruvoyl group is generated from an internal serine residue via an autocatalytic post-translational modification. Two non-identical subunits are generated from the proenzyme in this reaction, and the pyruvate is formed at the N-terminus of the alpha chain, which is derived from the carboxyl end of the proenzyme. The autoendoproteolytic cleavage occurs by a canonical serine protease mechanism, in which the side chain hydroxyl group of the serine supplies its oxygen atom to form the C-terminus of the beta chain, while the remainder of the serine residue undergoes an oxidative deamination to produce ammonia and the pyruvoyl prosthetic group on the alpha chain. During this reaction, the Ser that is part of the protease active site of the proenzyme becomes the pyruvoyl prosthetic group, which constitutes an essential element of the active site of the mature decarboxylase.</text>
</comment>
<comment type="similarity">
    <text evidence="1">Belongs to the phosphatidylserine decarboxylase family. PSD-B subfamily. Prokaryotic type I sub-subfamily.</text>
</comment>
<reference key="1">
    <citation type="submission" date="2007-05" db="EMBL/GenBank/DDBJ databases">
        <title>Complete sequence of Pseudomonas putida F1.</title>
        <authorList>
            <consortium name="US DOE Joint Genome Institute"/>
            <person name="Copeland A."/>
            <person name="Lucas S."/>
            <person name="Lapidus A."/>
            <person name="Barry K."/>
            <person name="Detter J.C."/>
            <person name="Glavina del Rio T."/>
            <person name="Hammon N."/>
            <person name="Israni S."/>
            <person name="Dalin E."/>
            <person name="Tice H."/>
            <person name="Pitluck S."/>
            <person name="Chain P."/>
            <person name="Malfatti S."/>
            <person name="Shin M."/>
            <person name="Vergez L."/>
            <person name="Schmutz J."/>
            <person name="Larimer F."/>
            <person name="Land M."/>
            <person name="Hauser L."/>
            <person name="Kyrpides N."/>
            <person name="Lykidis A."/>
            <person name="Parales R."/>
            <person name="Richardson P."/>
        </authorList>
    </citation>
    <scope>NUCLEOTIDE SEQUENCE [LARGE SCALE GENOMIC DNA]</scope>
    <source>
        <strain>ATCC 700007 / DSM 6899 / JCM 31910 / BCRC 17059 / LMG 24140 / F1</strain>
    </source>
</reference>
<protein>
    <recommendedName>
        <fullName evidence="1">Phosphatidylserine decarboxylase proenzyme</fullName>
        <ecNumber evidence="1">4.1.1.65</ecNumber>
    </recommendedName>
    <component>
        <recommendedName>
            <fullName evidence="1">Phosphatidylserine decarboxylase alpha chain</fullName>
        </recommendedName>
    </component>
    <component>
        <recommendedName>
            <fullName evidence="1">Phosphatidylserine decarboxylase beta chain</fullName>
        </recommendedName>
    </component>
</protein>
<dbReference type="EC" id="4.1.1.65" evidence="1"/>
<dbReference type="EMBL" id="CP000712">
    <property type="protein sequence ID" value="ABQ80904.1"/>
    <property type="molecule type" value="Genomic_DNA"/>
</dbReference>
<dbReference type="SMR" id="A5W9U4"/>
<dbReference type="KEGG" id="ppf:Pput_4784"/>
<dbReference type="eggNOG" id="COG0688">
    <property type="taxonomic scope" value="Bacteria"/>
</dbReference>
<dbReference type="HOGENOM" id="CLU_029061_4_1_6"/>
<dbReference type="UniPathway" id="UPA00558">
    <property type="reaction ID" value="UER00616"/>
</dbReference>
<dbReference type="GO" id="GO:0005886">
    <property type="term" value="C:plasma membrane"/>
    <property type="evidence" value="ECO:0007669"/>
    <property type="project" value="UniProtKB-SubCell"/>
</dbReference>
<dbReference type="GO" id="GO:0004609">
    <property type="term" value="F:phosphatidylserine decarboxylase activity"/>
    <property type="evidence" value="ECO:0007669"/>
    <property type="project" value="UniProtKB-UniRule"/>
</dbReference>
<dbReference type="GO" id="GO:0006646">
    <property type="term" value="P:phosphatidylethanolamine biosynthetic process"/>
    <property type="evidence" value="ECO:0007669"/>
    <property type="project" value="UniProtKB-UniRule"/>
</dbReference>
<dbReference type="HAMAP" id="MF_00662">
    <property type="entry name" value="PS_decarb_PSD_B_type1"/>
    <property type="match status" value="1"/>
</dbReference>
<dbReference type="InterPro" id="IPR003817">
    <property type="entry name" value="PS_Dcarbxylase"/>
</dbReference>
<dbReference type="InterPro" id="IPR033177">
    <property type="entry name" value="PSD-B"/>
</dbReference>
<dbReference type="InterPro" id="IPR033178">
    <property type="entry name" value="PSD_type1_pro"/>
</dbReference>
<dbReference type="NCBIfam" id="TIGR00163">
    <property type="entry name" value="PS_decarb"/>
    <property type="match status" value="1"/>
</dbReference>
<dbReference type="PANTHER" id="PTHR10067">
    <property type="entry name" value="PHOSPHATIDYLSERINE DECARBOXYLASE"/>
    <property type="match status" value="1"/>
</dbReference>
<dbReference type="PANTHER" id="PTHR10067:SF6">
    <property type="entry name" value="PHOSPHATIDYLSERINE DECARBOXYLASE PROENZYME, MITOCHONDRIAL"/>
    <property type="match status" value="1"/>
</dbReference>
<dbReference type="Pfam" id="PF02666">
    <property type="entry name" value="PS_Dcarbxylase"/>
    <property type="match status" value="1"/>
</dbReference>
<feature type="chain" id="PRO_1000026572" description="Phosphatidylserine decarboxylase beta chain" evidence="1">
    <location>
        <begin position="1"/>
        <end position="251"/>
    </location>
</feature>
<feature type="chain" id="PRO_1000026573" description="Phosphatidylserine decarboxylase alpha chain" evidence="1">
    <location>
        <begin position="252"/>
        <end position="287"/>
    </location>
</feature>
<feature type="active site" description="Charge relay system; for autoendoproteolytic cleavage activity" evidence="1">
    <location>
        <position position="90"/>
    </location>
</feature>
<feature type="active site" description="Charge relay system; for autoendoproteolytic cleavage activity" evidence="1">
    <location>
        <position position="147"/>
    </location>
</feature>
<feature type="active site" description="Charge relay system; for autoendoproteolytic cleavage activity" evidence="1">
    <location>
        <position position="252"/>
    </location>
</feature>
<feature type="active site" description="Schiff-base intermediate with substrate; via pyruvic acid; for decarboxylase activity" evidence="1">
    <location>
        <position position="252"/>
    </location>
</feature>
<feature type="site" description="Cleavage (non-hydrolytic); by autocatalysis" evidence="1">
    <location>
        <begin position="251"/>
        <end position="252"/>
    </location>
</feature>
<feature type="modified residue" description="Pyruvic acid (Ser); by autocatalysis" evidence="1">
    <location>
        <position position="252"/>
    </location>
</feature>
<accession>A5W9U4</accession>
<gene>
    <name evidence="1" type="primary">psd</name>
    <name type="ordered locus">Pput_4784</name>
</gene>
<sequence>MKSRLFIISQYLLPHHLLSRLAGCIAECRVRWFKNAFTAWFAKRYQVNMSEALVEDLSAYEHFNAFFTRALKPGARPLDETPGAILCPADGAVSQLGPIEHGRIFQAKGHGFSAQELLGGDPAMAAPFMGGEFATIYLSPKDYHRVHMPLAGTLREMVYVPGRLFSVNQTTAENVPELFARNERVVCLFDTERGPMAVVLVGAMIVASIETVWAGLVTPPKRELKTFRYDEASRTPIHLEKGAELGRFKLGSTAIVLFGPEQVKWAESLGAGSAVRMGQQLAAPVQA</sequence>
<keyword id="KW-1003">Cell membrane</keyword>
<keyword id="KW-0210">Decarboxylase</keyword>
<keyword id="KW-0444">Lipid biosynthesis</keyword>
<keyword id="KW-0443">Lipid metabolism</keyword>
<keyword id="KW-0456">Lyase</keyword>
<keyword id="KW-0472">Membrane</keyword>
<keyword id="KW-0594">Phospholipid biosynthesis</keyword>
<keyword id="KW-1208">Phospholipid metabolism</keyword>
<keyword id="KW-0670">Pyruvate</keyword>
<keyword id="KW-0865">Zymogen</keyword>
<proteinExistence type="inferred from homology"/>
<evidence type="ECO:0000255" key="1">
    <source>
        <dbReference type="HAMAP-Rule" id="MF_00662"/>
    </source>
</evidence>
<organism>
    <name type="scientific">Pseudomonas putida (strain ATCC 700007 / DSM 6899 / JCM 31910 / BCRC 17059 / LMG 24140 / F1)</name>
    <dbReference type="NCBI Taxonomy" id="351746"/>
    <lineage>
        <taxon>Bacteria</taxon>
        <taxon>Pseudomonadati</taxon>
        <taxon>Pseudomonadota</taxon>
        <taxon>Gammaproteobacteria</taxon>
        <taxon>Pseudomonadales</taxon>
        <taxon>Pseudomonadaceae</taxon>
        <taxon>Pseudomonas</taxon>
    </lineage>
</organism>